<protein>
    <recommendedName>
        <fullName evidence="2">Small ribosomal subunit protein uS7cz/uS7cy</fullName>
    </recommendedName>
    <alternativeName>
        <fullName>30S ribosomal protein S7, chloroplastic</fullName>
    </alternativeName>
</protein>
<accession>B0Z4S1</accession>
<feature type="chain" id="PRO_0000344352" description="Small ribosomal subunit protein uS7cz/uS7cy">
    <location>
        <begin position="1"/>
        <end position="155"/>
    </location>
</feature>
<sequence>MSRRGTAEEKTAKSDPIYRNRLVNMLINRILKHGKKSLAYQILYRAMKKIQQKTETNPLSVLRQAIRRVTPDIAVKARRASGSTHPVPIEIGSTQGRALAIRWLLGASRKRPGRNMAFKLSSELVDATKGRGGAIRKREETHRMAEANRAFAHFR</sequence>
<organism>
    <name type="scientific">Oenothera argillicola</name>
    <name type="common">Appalachian evening primrose</name>
    <dbReference type="NCBI Taxonomy" id="3940"/>
    <lineage>
        <taxon>Eukaryota</taxon>
        <taxon>Viridiplantae</taxon>
        <taxon>Streptophyta</taxon>
        <taxon>Embryophyta</taxon>
        <taxon>Tracheophyta</taxon>
        <taxon>Spermatophyta</taxon>
        <taxon>Magnoliopsida</taxon>
        <taxon>eudicotyledons</taxon>
        <taxon>Gunneridae</taxon>
        <taxon>Pentapetalae</taxon>
        <taxon>rosids</taxon>
        <taxon>malvids</taxon>
        <taxon>Myrtales</taxon>
        <taxon>Onagraceae</taxon>
        <taxon>Onagroideae</taxon>
        <taxon>Onagreae</taxon>
        <taxon>Oenothera</taxon>
    </lineage>
</organism>
<reference key="1">
    <citation type="journal article" date="2008" name="Nucleic Acids Res.">
        <title>The complete nucleotide sequences of the five genetically distinct plastid genomes of Oenothera, subsection Oenothera: I. Sequence evaluation and plastome evolution.</title>
        <authorList>
            <person name="Greiner S."/>
            <person name="Wang X."/>
            <person name="Rauwolf U."/>
            <person name="Silber M.V."/>
            <person name="Mayer K."/>
            <person name="Meurer J."/>
            <person name="Haberer G."/>
            <person name="Herrmann R.G."/>
        </authorList>
    </citation>
    <scope>NUCLEOTIDE SEQUENCE [LARGE SCALE GENOMIC DNA]</scope>
    <source>
        <strain>cv. Douthat 1</strain>
    </source>
</reference>
<dbReference type="EMBL" id="EU262887">
    <property type="protein sequence ID" value="ABW98749.1"/>
    <property type="molecule type" value="Genomic_DNA"/>
</dbReference>
<dbReference type="EMBL" id="EU262887">
    <property type="protein sequence ID" value="ABW98762.1"/>
    <property type="molecule type" value="Genomic_DNA"/>
</dbReference>
<dbReference type="SMR" id="B0Z4S1"/>
<dbReference type="GO" id="GO:0009507">
    <property type="term" value="C:chloroplast"/>
    <property type="evidence" value="ECO:0007669"/>
    <property type="project" value="UniProtKB-SubCell"/>
</dbReference>
<dbReference type="GO" id="GO:0015935">
    <property type="term" value="C:small ribosomal subunit"/>
    <property type="evidence" value="ECO:0007669"/>
    <property type="project" value="InterPro"/>
</dbReference>
<dbReference type="GO" id="GO:0019843">
    <property type="term" value="F:rRNA binding"/>
    <property type="evidence" value="ECO:0007669"/>
    <property type="project" value="UniProtKB-UniRule"/>
</dbReference>
<dbReference type="GO" id="GO:0003735">
    <property type="term" value="F:structural constituent of ribosome"/>
    <property type="evidence" value="ECO:0007669"/>
    <property type="project" value="InterPro"/>
</dbReference>
<dbReference type="GO" id="GO:0006412">
    <property type="term" value="P:translation"/>
    <property type="evidence" value="ECO:0007669"/>
    <property type="project" value="UniProtKB-UniRule"/>
</dbReference>
<dbReference type="CDD" id="cd14871">
    <property type="entry name" value="uS7_Chloroplast"/>
    <property type="match status" value="1"/>
</dbReference>
<dbReference type="FunFam" id="1.10.455.10:FF:000001">
    <property type="entry name" value="30S ribosomal protein S7"/>
    <property type="match status" value="1"/>
</dbReference>
<dbReference type="Gene3D" id="1.10.455.10">
    <property type="entry name" value="Ribosomal protein S7 domain"/>
    <property type="match status" value="1"/>
</dbReference>
<dbReference type="HAMAP" id="MF_00480_B">
    <property type="entry name" value="Ribosomal_uS7_B"/>
    <property type="match status" value="1"/>
</dbReference>
<dbReference type="InterPro" id="IPR000235">
    <property type="entry name" value="Ribosomal_uS7"/>
</dbReference>
<dbReference type="InterPro" id="IPR005717">
    <property type="entry name" value="Ribosomal_uS7_bac/org-type"/>
</dbReference>
<dbReference type="InterPro" id="IPR020606">
    <property type="entry name" value="Ribosomal_uS7_CS"/>
</dbReference>
<dbReference type="InterPro" id="IPR023798">
    <property type="entry name" value="Ribosomal_uS7_dom"/>
</dbReference>
<dbReference type="InterPro" id="IPR036823">
    <property type="entry name" value="Ribosomal_uS7_dom_sf"/>
</dbReference>
<dbReference type="NCBIfam" id="TIGR01029">
    <property type="entry name" value="rpsG_bact"/>
    <property type="match status" value="1"/>
</dbReference>
<dbReference type="PANTHER" id="PTHR11205">
    <property type="entry name" value="RIBOSOMAL PROTEIN S7"/>
    <property type="match status" value="1"/>
</dbReference>
<dbReference type="Pfam" id="PF00177">
    <property type="entry name" value="Ribosomal_S7"/>
    <property type="match status" value="1"/>
</dbReference>
<dbReference type="PIRSF" id="PIRSF002122">
    <property type="entry name" value="RPS7p_RPS7a_RPS5e_RPS7o"/>
    <property type="match status" value="1"/>
</dbReference>
<dbReference type="SUPFAM" id="SSF47973">
    <property type="entry name" value="Ribosomal protein S7"/>
    <property type="match status" value="1"/>
</dbReference>
<dbReference type="PROSITE" id="PS00052">
    <property type="entry name" value="RIBOSOMAL_S7"/>
    <property type="match status" value="1"/>
</dbReference>
<keyword id="KW-0150">Chloroplast</keyword>
<keyword id="KW-0934">Plastid</keyword>
<keyword id="KW-0687">Ribonucleoprotein</keyword>
<keyword id="KW-0689">Ribosomal protein</keyword>
<keyword id="KW-0694">RNA-binding</keyword>
<keyword id="KW-0699">rRNA-binding</keyword>
<geneLocation type="chloroplast"/>
<gene>
    <name type="primary">rps7-A</name>
</gene>
<gene>
    <name type="primary">rps7-B</name>
</gene>
<name>RR7_OENAR</name>
<evidence type="ECO:0000250" key="1"/>
<evidence type="ECO:0000255" key="2">
    <source>
        <dbReference type="HAMAP-Rule" id="MF_00480"/>
    </source>
</evidence>
<evidence type="ECO:0000305" key="3"/>
<proteinExistence type="inferred from homology"/>
<comment type="function">
    <text evidence="1">One of the primary rRNA binding proteins, it binds directly to 16S rRNA where it nucleates assembly of the head domain of the 30S subunit.</text>
</comment>
<comment type="subunit">
    <text evidence="1">Part of the 30S ribosomal subunit.</text>
</comment>
<comment type="subcellular location">
    <subcellularLocation>
        <location>Plastid</location>
        <location>Chloroplast</location>
    </subcellularLocation>
</comment>
<comment type="similarity">
    <text evidence="3">Belongs to the universal ribosomal protein uS7 family.</text>
</comment>